<gene>
    <name type="primary">cfxQ</name>
</gene>
<reference key="1">
    <citation type="journal article" date="1991" name="Mol. Gen. Genet.">
        <title>Identification and organization of carbon dioxide fixation genes in Xanthobacter flavus H4-14.</title>
        <authorList>
            <person name="Meijer W.G."/>
            <person name="Arnberg A.C."/>
            <person name="Enequist H.G."/>
            <person name="Terpstra P."/>
            <person name="Lidstrom M.E."/>
            <person name="Dijkhuizen L."/>
        </authorList>
    </citation>
    <scope>NUCLEOTIDE SEQUENCE [GENOMIC DNA]</scope>
    <source>
        <strain>H4-14</strain>
    </source>
</reference>
<dbReference type="EMBL" id="X17252">
    <property type="protein sequence ID" value="CAA35117.1"/>
    <property type="molecule type" value="Genomic_DNA"/>
</dbReference>
<dbReference type="PIR" id="S13575">
    <property type="entry name" value="BWQXQX"/>
</dbReference>
<dbReference type="SMR" id="P23013"/>
<dbReference type="GO" id="GO:0005524">
    <property type="term" value="F:ATP binding"/>
    <property type="evidence" value="ECO:0007669"/>
    <property type="project" value="UniProtKB-KW"/>
</dbReference>
<dbReference type="GO" id="GO:0016887">
    <property type="term" value="F:ATP hydrolysis activity"/>
    <property type="evidence" value="ECO:0007669"/>
    <property type="project" value="InterPro"/>
</dbReference>
<dbReference type="CDD" id="cd00009">
    <property type="entry name" value="AAA"/>
    <property type="match status" value="1"/>
</dbReference>
<dbReference type="FunFam" id="3.40.50.300:FF:000216">
    <property type="entry name" value="Type VII secretion ATPase EccA"/>
    <property type="match status" value="1"/>
</dbReference>
<dbReference type="Gene3D" id="1.10.8.60">
    <property type="match status" value="1"/>
</dbReference>
<dbReference type="Gene3D" id="3.40.50.300">
    <property type="entry name" value="P-loop containing nucleotide triphosphate hydrolases"/>
    <property type="match status" value="1"/>
</dbReference>
<dbReference type="InterPro" id="IPR003593">
    <property type="entry name" value="AAA+_ATPase"/>
</dbReference>
<dbReference type="InterPro" id="IPR041627">
    <property type="entry name" value="AAA_lid_6"/>
</dbReference>
<dbReference type="InterPro" id="IPR003959">
    <property type="entry name" value="ATPase_AAA_core"/>
</dbReference>
<dbReference type="InterPro" id="IPR000470">
    <property type="entry name" value="CbxX/CfqX_mono"/>
</dbReference>
<dbReference type="InterPro" id="IPR000641">
    <property type="entry name" value="CbxX/CfxQ"/>
</dbReference>
<dbReference type="InterPro" id="IPR050773">
    <property type="entry name" value="CbxX/CfxQ_RuBisCO_ESX"/>
</dbReference>
<dbReference type="InterPro" id="IPR027417">
    <property type="entry name" value="P-loop_NTPase"/>
</dbReference>
<dbReference type="NCBIfam" id="TIGR02880">
    <property type="entry name" value="cbbX_cfxQ"/>
    <property type="match status" value="1"/>
</dbReference>
<dbReference type="PANTHER" id="PTHR43392">
    <property type="entry name" value="AAA-TYPE ATPASE FAMILY PROTEIN / ANKYRIN REPEAT FAMILY PROTEIN"/>
    <property type="match status" value="1"/>
</dbReference>
<dbReference type="PANTHER" id="PTHR43392:SF2">
    <property type="entry name" value="AAA-TYPE ATPASE FAMILY PROTEIN _ ANKYRIN REPEAT FAMILY PROTEIN"/>
    <property type="match status" value="1"/>
</dbReference>
<dbReference type="Pfam" id="PF00004">
    <property type="entry name" value="AAA"/>
    <property type="match status" value="1"/>
</dbReference>
<dbReference type="Pfam" id="PF17866">
    <property type="entry name" value="AAA_lid_6"/>
    <property type="match status" value="1"/>
</dbReference>
<dbReference type="PRINTS" id="PR00819">
    <property type="entry name" value="CBXCFQXSUPER"/>
</dbReference>
<dbReference type="PRINTS" id="PR00820">
    <property type="entry name" value="CBXXCFQX"/>
</dbReference>
<dbReference type="SMART" id="SM00382">
    <property type="entry name" value="AAA"/>
    <property type="match status" value="1"/>
</dbReference>
<dbReference type="SUPFAM" id="SSF52540">
    <property type="entry name" value="P-loop containing nucleoside triphosphate hydrolases"/>
    <property type="match status" value="1"/>
</dbReference>
<comment type="function">
    <text>Necessary for the expression of RuBisCO.</text>
</comment>
<comment type="similarity">
    <text evidence="2">Belongs to the CbxX/CfxQ family.</text>
</comment>
<proteinExistence type="inferred from homology"/>
<keyword id="KW-0067">ATP-binding</keyword>
<keyword id="KW-0547">Nucleotide-binding</keyword>
<evidence type="ECO:0000255" key="1"/>
<evidence type="ECO:0000305" key="2"/>
<protein>
    <recommendedName>
        <fullName>Protein CfxQ</fullName>
    </recommendedName>
</protein>
<accession>P23013</accession>
<sequence>MLDVATSAPSAALPAEAAEGRLDLGALFTESEVPEFLAELDEGLIGLKPVKRRIREIAAHLVIGRAREKLGLTSGAPTLHMAFTGNPGTGKTTVALKMAQILHRLGYVRRGHLVSVTRDDLVGQYIGHTAPKTKEILKKAMGGVLFIDEAYYLYRPENERDYGQEAIEILLQVMENQRDDLVVILAGYKDRMDRFFESNPGFRSRIAHHIDFPDYEDAELVEIAKTMAADADYTFSPEAEVAIEEYVAKRRLQPNFANARSIRNALDRMRLRQSLRLFESGGLADRAALSTISEGDVRASRVFAGGIDAPDYKPQTE</sequence>
<feature type="chain" id="PRO_0000063035" description="Protein CfxQ">
    <location>
        <begin position="1"/>
        <end position="317"/>
    </location>
</feature>
<feature type="binding site" evidence="1">
    <location>
        <begin position="85"/>
        <end position="92"/>
    </location>
    <ligand>
        <name>ATP</name>
        <dbReference type="ChEBI" id="CHEBI:30616"/>
    </ligand>
</feature>
<name>CFXQ_XANFL</name>
<organism>
    <name type="scientific">Xanthobacter flavus</name>
    <dbReference type="NCBI Taxonomy" id="281"/>
    <lineage>
        <taxon>Bacteria</taxon>
        <taxon>Pseudomonadati</taxon>
        <taxon>Pseudomonadota</taxon>
        <taxon>Alphaproteobacteria</taxon>
        <taxon>Hyphomicrobiales</taxon>
        <taxon>Xanthobacteraceae</taxon>
        <taxon>Xanthobacter</taxon>
    </lineage>
</organism>